<proteinExistence type="inferred from homology"/>
<comment type="function">
    <text evidence="2 3 6">Prenyltransferase; part of the gene cluster that mediates the biosynthesis of paraherquamide, a fungal indole alkaloid that belongs to a family of natural products containing a characteristic bicyclo[2.2.2]diazaoctane core (PubMed:23213353). The first steps in the biosynthesis of paraherquamide is the production of the beta-methyl-proline precursor from L-isoleucine (Probable). They require oxidation of a terminally hydroxylated L-isoleucine to the corresponding aldehyde by enzymes which have still to be identified (Probable). Spontaneous cyclization and dehydration would yield the 4-methyl pyrolline-5-carboxylic acid, which is then reduced by the pyrroline-5-carboxylate reductase phqD leading to the beta-methyl-proline precursor (Probable). The next step of paraherquamide biosynthesis involves coupling of beta-methyl-proline and L-tryptophan by the bimodular NRPS phqB, to produce a monooxopiperazine intermediate (Probable). The reductase (R) domain of phqB utilizes NADPH for hydride transfer to reduce the thioester bond of the T domain-tethered linear dipeptide to a hemithioaminal intermediate, which spontaneously cleaves the C-S bond to release the aldehyde product (PubMed:31548667). This compound undergoes spontaneous cyclization and dehydration to give a dienamine which is reverse prenylated at C-2 by the reverse prenyltransferase phqJ (Probable). The other prenyltransferase present in the cluster, phqI may be a redundant gene in the pathway (Probable). During biosynthetic assembly, the key step to produce the polycyclic core is catalyzed by the bifunctional reductase and intramolecular [4+2] Diels-Alderase, phqE, resulting in formation of the [2.2.2] diazaoctane intermediate preparaherquamide (PubMed:31548667). Following formation of preparaherquamide, an indole 2,3-epoxidation-initiated pinacol-like rearrangement is catalyzed by the phqK FAD-dependent monooxygenase (Probable). The prenyltransferase phqA, the cytochrome P450 monooxygenase phqL, and the FAD-linked oxidoreductase phqH (or the cytochrome P450 monooxygenase phqM), are proposed to be involved in the formation of the pyran ring (Probable). The FAD-dependent monooxygenase phqK is likely responsible for generation of the spiro-oxindole, and the N-methylation is likely mediated by the phqN methyltransferase leading to the isolable natural product paraherquamide F (Probable). However, the order of these biosynthetic steps has still to be determined (Probable). In late-stage paraherquamide biosynthesis, the third P450 monooxygenase, phqO, is probably responsible for the C-14 hydroxylation, transforming paraherquamide F to paraherquamide G, and paraherquamide E to the final product paraherquamide A (Probable). The expansion from the 6-membered ring pyran (in paraherquamides F and G) to the 7-membered dioxepin ring (in paraherquamides A and E) represents a poorly understood but intriguing process that probably involves the 2-oxoglutarate-dependent dioxygenase phqC (Probable). Finally, the remaining members of the paraherquamide cluster, including phqI as well as phqM (or phqH), do not have a clearly prescribed role and appear to be redundant (Probable).</text>
</comment>
<comment type="pathway">
    <text evidence="6">Alkaloid biosynthesis.</text>
</comment>
<comment type="similarity">
    <text evidence="5">Belongs to the tryptophan dimethylallyltransferase family.</text>
</comment>
<organism>
    <name type="scientific">Penicillium fellutanum</name>
    <dbReference type="NCBI Taxonomy" id="70095"/>
    <lineage>
        <taxon>Eukaryota</taxon>
        <taxon>Fungi</taxon>
        <taxon>Dikarya</taxon>
        <taxon>Ascomycota</taxon>
        <taxon>Pezizomycotina</taxon>
        <taxon>Eurotiomycetes</taxon>
        <taxon>Eurotiomycetidae</taxon>
        <taxon>Eurotiales</taxon>
        <taxon>Aspergillaceae</taxon>
        <taxon>Penicillium</taxon>
    </lineage>
</organism>
<evidence type="ECO:0000250" key="1">
    <source>
        <dbReference type="UniProtKB" id="Q4WAW7"/>
    </source>
</evidence>
<evidence type="ECO:0000269" key="2">
    <source>
    </source>
</evidence>
<evidence type="ECO:0000269" key="3">
    <source>
    </source>
</evidence>
<evidence type="ECO:0000303" key="4">
    <source>
    </source>
</evidence>
<evidence type="ECO:0000305" key="5"/>
<evidence type="ECO:0000305" key="6">
    <source>
    </source>
</evidence>
<keyword id="KW-0017">Alkaloid metabolism</keyword>
<keyword id="KW-0637">Prenyltransferase</keyword>
<keyword id="KW-0808">Transferase</keyword>
<sequence>MTIEATEGHVSKGMLAKGDSTSPIPTIFDVLSRDHVFVDSHQKVWWERTGQLLDKILASAGYNPARRLEALTFYIQVLIPFLGPHPHQFRSAITRSGLPLEFSVNYQQRGDIDPVVRIGFEPVAAASGTEIDPYNQIPVVDLLNQLEVLNIPAFDPSLFRYFLDAHTVNGHEKGLLKEKKIEGSELTSQSAFGFDLKEKAISVKGYTFPAIKCTLNEKGFGNFISESIQPLAAQMGPIPSFDMVHSYLEGTNGYSQFAFWSFDCVDPAQSRLKLYSSHNSVVWSKVEEIWTLGGRAKSPVVQEGLVYLKELWELTKLSEGHREFNGGFDDGKDATATPMVWNYEMKIGEAFPLTKFYFPIHGESDQNVIGGLAQFLSRIGLSKYGDNYEATVRHYLYDFSTSPVPCKNDSIANFDSPERDLSKTARLTSWISFAYTEKTGVYLSVYYHSSDEYPWLELEEIN</sequence>
<reference key="1">
    <citation type="journal article" date="2012" name="Med. Chem. Commun.">
        <title>Comparative analysis of the biosynthetic systems for fungal bicyclo[2.2.2]diazaoctane indole alkaloids: the (+)/(-)-notoamide, paraherquamide and malbrancheamide pathways.</title>
        <authorList>
            <person name="Li S."/>
            <person name="Anand K."/>
            <person name="Tran H."/>
            <person name="Yu F."/>
            <person name="Finefield J.M."/>
            <person name="Sunderhaus J.D."/>
            <person name="McAfoos T.J."/>
            <person name="Tsukamoto S."/>
            <person name="Williams R.M."/>
            <person name="Sherman D.H."/>
        </authorList>
    </citation>
    <scope>NUCLEOTIDE SEQUENCE [GENOMIC DNA]</scope>
    <scope>FUNCTION</scope>
    <scope>PATHWAY</scope>
    <source>
        <strain>ATCC 20841 / MF5123</strain>
    </source>
</reference>
<reference key="2">
    <citation type="journal article" date="2019" name="Nat. Chem.">
        <title>Fungal indole alkaloid biogenesis through evolution of a bifunctional reductase/Diels-Alderase.</title>
        <authorList>
            <person name="Dan Q."/>
            <person name="Newmister S.A."/>
            <person name="Klas K.R."/>
            <person name="Fraley A.E."/>
            <person name="McAfoos T.J."/>
            <person name="Somoza A.D."/>
            <person name="Sunderhaus J.D."/>
            <person name="Ye Y."/>
            <person name="Shende V.V."/>
            <person name="Yu F."/>
            <person name="Sanders J.N."/>
            <person name="Brown W.C."/>
            <person name="Zhao L."/>
            <person name="Paton R.S."/>
            <person name="Houk K.N."/>
            <person name="Smith J.L."/>
            <person name="Sherman D.H."/>
            <person name="Williams R.M."/>
        </authorList>
    </citation>
    <scope>FUNCTION</scope>
</reference>
<protein>
    <recommendedName>
        <fullName evidence="4">Prenyltransferase phqI</fullName>
        <ecNumber evidence="6">2.5.1.-</ecNumber>
    </recommendedName>
    <alternativeName>
        <fullName evidence="4">Paraherquamide biosynthesis cluster protein I</fullName>
    </alternativeName>
</protein>
<feature type="chain" id="PRO_0000448864" description="Prenyltransferase phqI">
    <location>
        <begin position="1"/>
        <end position="462"/>
    </location>
</feature>
<feature type="binding site" evidence="1">
    <location>
        <position position="101"/>
    </location>
    <ligand>
        <name>brevianamide F</name>
        <dbReference type="ChEBI" id="CHEBI:64530"/>
    </ligand>
</feature>
<feature type="binding site" evidence="1">
    <location>
        <position position="117"/>
    </location>
    <ligand>
        <name>dimethylallyl diphosphate</name>
        <dbReference type="ChEBI" id="CHEBI:57623"/>
    </ligand>
</feature>
<feature type="binding site" evidence="1">
    <location>
        <position position="204"/>
    </location>
    <ligand>
        <name>dimethylallyl diphosphate</name>
        <dbReference type="ChEBI" id="CHEBI:57623"/>
    </ligand>
</feature>
<feature type="binding site" evidence="1">
    <location>
        <position position="206"/>
    </location>
    <ligand>
        <name>dimethylallyl diphosphate</name>
        <dbReference type="ChEBI" id="CHEBI:57623"/>
    </ligand>
</feature>
<feature type="binding site" evidence="1">
    <location>
        <position position="273"/>
    </location>
    <ligand>
        <name>dimethylallyl diphosphate</name>
        <dbReference type="ChEBI" id="CHEBI:57623"/>
    </ligand>
</feature>
<feature type="binding site" evidence="1">
    <location>
        <position position="275"/>
    </location>
    <ligand>
        <name>dimethylallyl diphosphate</name>
        <dbReference type="ChEBI" id="CHEBI:57623"/>
    </ligand>
</feature>
<feature type="binding site" evidence="1">
    <location>
        <position position="357"/>
    </location>
    <ligand>
        <name>dimethylallyl diphosphate</name>
        <dbReference type="ChEBI" id="CHEBI:57623"/>
    </ligand>
</feature>
<feature type="binding site" evidence="1">
    <location>
        <position position="442"/>
    </location>
    <ligand>
        <name>dimethylallyl diphosphate</name>
        <dbReference type="ChEBI" id="CHEBI:57623"/>
    </ligand>
</feature>
<feature type="binding site" evidence="1">
    <location>
        <position position="446"/>
    </location>
    <ligand>
        <name>dimethylallyl diphosphate</name>
        <dbReference type="ChEBI" id="CHEBI:57623"/>
    </ligand>
</feature>
<feature type="site" description="Required for regioselectivity" evidence="1">
    <location>
        <position position="119"/>
    </location>
</feature>
<gene>
    <name evidence="4" type="primary">phqI</name>
</gene>
<dbReference type="EC" id="2.5.1.-" evidence="6"/>
<dbReference type="EMBL" id="JQ708195">
    <property type="protein sequence ID" value="AGA37276.1"/>
    <property type="molecule type" value="Genomic_DNA"/>
</dbReference>
<dbReference type="SMR" id="L0E168"/>
<dbReference type="GO" id="GO:0004659">
    <property type="term" value="F:prenyltransferase activity"/>
    <property type="evidence" value="ECO:0007669"/>
    <property type="project" value="UniProtKB-KW"/>
</dbReference>
<dbReference type="GO" id="GO:0009820">
    <property type="term" value="P:alkaloid metabolic process"/>
    <property type="evidence" value="ECO:0007669"/>
    <property type="project" value="UniProtKB-KW"/>
</dbReference>
<dbReference type="CDD" id="cd13929">
    <property type="entry name" value="PT-DMATS_CymD"/>
    <property type="match status" value="1"/>
</dbReference>
<dbReference type="InterPro" id="IPR033964">
    <property type="entry name" value="Aro_prenylTrfase"/>
</dbReference>
<dbReference type="InterPro" id="IPR017795">
    <property type="entry name" value="Aro_prenylTrfase_DMATS"/>
</dbReference>
<dbReference type="InterPro" id="IPR012148">
    <property type="entry name" value="DMATS-type_fun"/>
</dbReference>
<dbReference type="NCBIfam" id="TIGR03429">
    <property type="entry name" value="arom_pren_DMATS"/>
    <property type="match status" value="1"/>
</dbReference>
<dbReference type="PANTHER" id="PTHR40627">
    <property type="entry name" value="INDOLE PRENYLTRANSFERASE TDIB-RELATED"/>
    <property type="match status" value="1"/>
</dbReference>
<dbReference type="PANTHER" id="PTHR40627:SF3">
    <property type="entry name" value="PRENYLTRANSFERASE ASQH2-RELATED"/>
    <property type="match status" value="1"/>
</dbReference>
<dbReference type="Pfam" id="PF11991">
    <property type="entry name" value="Trp_DMAT"/>
    <property type="match status" value="1"/>
</dbReference>
<dbReference type="PIRSF" id="PIRSF000509">
    <property type="entry name" value="Trp_DMAT"/>
    <property type="match status" value="1"/>
</dbReference>
<dbReference type="SFLD" id="SFLDS00036">
    <property type="entry name" value="Aromatic_Prenyltransferase"/>
    <property type="match status" value="1"/>
</dbReference>
<dbReference type="SFLD" id="SFLDG01162">
    <property type="entry name" value="I"/>
    <property type="match status" value="1"/>
</dbReference>
<accession>L0E168</accession>
<name>PHQI_PENFE</name>